<gene>
    <name evidence="1" type="primary">rplY</name>
    <name evidence="1" type="synonym">ctc</name>
    <name type="ordered locus">SAR0502</name>
</gene>
<sequence>MASLKSIIRQGKQTRSDLKQLRKSGKVPAVVYGYGTKNVSVKVDEVEFIKVIREVCRNGVIELGVGSKTIKVMVADYQFDPLKNQITHIDFLAINMSEERTVEVPVQLVGEAVGAKEGGVVEQPLFNLEVTATPDNIPEAIEVDITELNINDSLTVADVKVTGDFKIENDSAESVVTVVAPTEEPTEEEIEAMEGEQQTEEPEVVGESKEDEEKTEE</sequence>
<comment type="function">
    <text evidence="1">This is one of the proteins that binds to the 5S RNA in the ribosome where it forms part of the central protuberance.</text>
</comment>
<comment type="subunit">
    <text evidence="1">Part of the 50S ribosomal subunit; part of the 5S rRNA/L5/L18/L25 subcomplex. Contacts the 5S rRNA. Binds to the 5S rRNA independently of L5 and L18.</text>
</comment>
<comment type="similarity">
    <text evidence="1">Belongs to the bacterial ribosomal protein bL25 family. CTC subfamily.</text>
</comment>
<reference key="1">
    <citation type="journal article" date="2004" name="Proc. Natl. Acad. Sci. U.S.A.">
        <title>Complete genomes of two clinical Staphylococcus aureus strains: evidence for the rapid evolution of virulence and drug resistance.</title>
        <authorList>
            <person name="Holden M.T.G."/>
            <person name="Feil E.J."/>
            <person name="Lindsay J.A."/>
            <person name="Peacock S.J."/>
            <person name="Day N.P.J."/>
            <person name="Enright M.C."/>
            <person name="Foster T.J."/>
            <person name="Moore C.E."/>
            <person name="Hurst L."/>
            <person name="Atkin R."/>
            <person name="Barron A."/>
            <person name="Bason N."/>
            <person name="Bentley S.D."/>
            <person name="Chillingworth C."/>
            <person name="Chillingworth T."/>
            <person name="Churcher C."/>
            <person name="Clark L."/>
            <person name="Corton C."/>
            <person name="Cronin A."/>
            <person name="Doggett J."/>
            <person name="Dowd L."/>
            <person name="Feltwell T."/>
            <person name="Hance Z."/>
            <person name="Harris B."/>
            <person name="Hauser H."/>
            <person name="Holroyd S."/>
            <person name="Jagels K."/>
            <person name="James K.D."/>
            <person name="Lennard N."/>
            <person name="Line A."/>
            <person name="Mayes R."/>
            <person name="Moule S."/>
            <person name="Mungall K."/>
            <person name="Ormond D."/>
            <person name="Quail M.A."/>
            <person name="Rabbinowitsch E."/>
            <person name="Rutherford K.M."/>
            <person name="Sanders M."/>
            <person name="Sharp S."/>
            <person name="Simmonds M."/>
            <person name="Stevens K."/>
            <person name="Whitehead S."/>
            <person name="Barrell B.G."/>
            <person name="Spratt B.G."/>
            <person name="Parkhill J."/>
        </authorList>
    </citation>
    <scope>NUCLEOTIDE SEQUENCE [LARGE SCALE GENOMIC DNA]</scope>
    <source>
        <strain>MRSA252</strain>
    </source>
</reference>
<name>RL25_STAAR</name>
<proteinExistence type="inferred from homology"/>
<dbReference type="EMBL" id="BX571856">
    <property type="protein sequence ID" value="CAG39524.1"/>
    <property type="molecule type" value="Genomic_DNA"/>
</dbReference>
<dbReference type="RefSeq" id="WP_000157647.1">
    <property type="nucleotide sequence ID" value="NC_002952.2"/>
</dbReference>
<dbReference type="SMR" id="Q6GJH0"/>
<dbReference type="KEGG" id="sar:SAR0502"/>
<dbReference type="HOGENOM" id="CLU_075939_2_1_9"/>
<dbReference type="Proteomes" id="UP000000596">
    <property type="component" value="Chromosome"/>
</dbReference>
<dbReference type="GO" id="GO:0022625">
    <property type="term" value="C:cytosolic large ribosomal subunit"/>
    <property type="evidence" value="ECO:0007669"/>
    <property type="project" value="TreeGrafter"/>
</dbReference>
<dbReference type="GO" id="GO:0008097">
    <property type="term" value="F:5S rRNA binding"/>
    <property type="evidence" value="ECO:0007669"/>
    <property type="project" value="InterPro"/>
</dbReference>
<dbReference type="GO" id="GO:0003735">
    <property type="term" value="F:structural constituent of ribosome"/>
    <property type="evidence" value="ECO:0007669"/>
    <property type="project" value="InterPro"/>
</dbReference>
<dbReference type="GO" id="GO:0006412">
    <property type="term" value="P:translation"/>
    <property type="evidence" value="ECO:0007669"/>
    <property type="project" value="UniProtKB-UniRule"/>
</dbReference>
<dbReference type="CDD" id="cd00495">
    <property type="entry name" value="Ribosomal_L25_TL5_CTC"/>
    <property type="match status" value="1"/>
</dbReference>
<dbReference type="FunFam" id="2.40.240.10:FF:000013">
    <property type="entry name" value="50S ribosomal protein L25"/>
    <property type="match status" value="1"/>
</dbReference>
<dbReference type="Gene3D" id="2.170.120.20">
    <property type="entry name" value="Ribosomal protein L25, beta domain"/>
    <property type="match status" value="1"/>
</dbReference>
<dbReference type="Gene3D" id="2.40.240.10">
    <property type="entry name" value="Ribosomal Protein L25, Chain P"/>
    <property type="match status" value="1"/>
</dbReference>
<dbReference type="HAMAP" id="MF_01334">
    <property type="entry name" value="Ribosomal_bL25_CTC"/>
    <property type="match status" value="1"/>
</dbReference>
<dbReference type="InterPro" id="IPR020056">
    <property type="entry name" value="Rbsml_bL25/Gln-tRNA_synth_N"/>
</dbReference>
<dbReference type="InterPro" id="IPR011035">
    <property type="entry name" value="Ribosomal_bL25/Gln-tRNA_synth"/>
</dbReference>
<dbReference type="InterPro" id="IPR020057">
    <property type="entry name" value="Ribosomal_bL25_b-dom"/>
</dbReference>
<dbReference type="InterPro" id="IPR037121">
    <property type="entry name" value="Ribosomal_bL25_C"/>
</dbReference>
<dbReference type="InterPro" id="IPR001021">
    <property type="entry name" value="Ribosomal_bL25_long"/>
</dbReference>
<dbReference type="InterPro" id="IPR029751">
    <property type="entry name" value="Ribosomal_L25_dom"/>
</dbReference>
<dbReference type="InterPro" id="IPR020930">
    <property type="entry name" value="Ribosomal_uL5_bac-type"/>
</dbReference>
<dbReference type="NCBIfam" id="TIGR00731">
    <property type="entry name" value="bL25_bact_ctc"/>
    <property type="match status" value="1"/>
</dbReference>
<dbReference type="NCBIfam" id="NF004133">
    <property type="entry name" value="PRK05618.2-4"/>
    <property type="match status" value="1"/>
</dbReference>
<dbReference type="NCBIfam" id="NF004134">
    <property type="entry name" value="PRK05618.2-5"/>
    <property type="match status" value="1"/>
</dbReference>
<dbReference type="PANTHER" id="PTHR33284">
    <property type="entry name" value="RIBOSOMAL PROTEIN L25/GLN-TRNA SYNTHETASE, ANTI-CODON-BINDING DOMAIN-CONTAINING PROTEIN"/>
    <property type="match status" value="1"/>
</dbReference>
<dbReference type="PANTHER" id="PTHR33284:SF1">
    <property type="entry name" value="RIBOSOMAL PROTEIN L25_GLN-TRNA SYNTHETASE, ANTI-CODON-BINDING DOMAIN-CONTAINING PROTEIN"/>
    <property type="match status" value="1"/>
</dbReference>
<dbReference type="Pfam" id="PF01386">
    <property type="entry name" value="Ribosomal_L25p"/>
    <property type="match status" value="1"/>
</dbReference>
<dbReference type="Pfam" id="PF14693">
    <property type="entry name" value="Ribosomal_TL5_C"/>
    <property type="match status" value="1"/>
</dbReference>
<dbReference type="SUPFAM" id="SSF50715">
    <property type="entry name" value="Ribosomal protein L25-like"/>
    <property type="match status" value="1"/>
</dbReference>
<organism>
    <name type="scientific">Staphylococcus aureus (strain MRSA252)</name>
    <dbReference type="NCBI Taxonomy" id="282458"/>
    <lineage>
        <taxon>Bacteria</taxon>
        <taxon>Bacillati</taxon>
        <taxon>Bacillota</taxon>
        <taxon>Bacilli</taxon>
        <taxon>Bacillales</taxon>
        <taxon>Staphylococcaceae</taxon>
        <taxon>Staphylococcus</taxon>
    </lineage>
</organism>
<feature type="chain" id="PRO_0000181595" description="Large ribosomal subunit protein bL25">
    <location>
        <begin position="1"/>
        <end position="217"/>
    </location>
</feature>
<feature type="region of interest" description="Disordered" evidence="2">
    <location>
        <begin position="178"/>
        <end position="217"/>
    </location>
</feature>
<feature type="compositionally biased region" description="Acidic residues" evidence="2">
    <location>
        <begin position="184"/>
        <end position="205"/>
    </location>
</feature>
<feature type="compositionally biased region" description="Basic and acidic residues" evidence="2">
    <location>
        <begin position="206"/>
        <end position="217"/>
    </location>
</feature>
<accession>Q6GJH0</accession>
<keyword id="KW-0687">Ribonucleoprotein</keyword>
<keyword id="KW-0689">Ribosomal protein</keyword>
<keyword id="KW-0694">RNA-binding</keyword>
<keyword id="KW-0699">rRNA-binding</keyword>
<evidence type="ECO:0000255" key="1">
    <source>
        <dbReference type="HAMAP-Rule" id="MF_01334"/>
    </source>
</evidence>
<evidence type="ECO:0000256" key="2">
    <source>
        <dbReference type="SAM" id="MobiDB-lite"/>
    </source>
</evidence>
<evidence type="ECO:0000305" key="3"/>
<protein>
    <recommendedName>
        <fullName evidence="1">Large ribosomal subunit protein bL25</fullName>
    </recommendedName>
    <alternativeName>
        <fullName evidence="3">50S ribosomal protein L25</fullName>
    </alternativeName>
    <alternativeName>
        <fullName evidence="1">General stress protein CTC</fullName>
    </alternativeName>
</protein>